<comment type="function">
    <text evidence="1">Attaches a formyl group to the free amino group of methionyl-tRNA(fMet). The formyl group appears to play a dual role in the initiator identity of N-formylmethionyl-tRNA by promoting its recognition by IF2 and preventing the misappropriation of this tRNA by the elongation apparatus.</text>
</comment>
<comment type="catalytic activity">
    <reaction evidence="1">
        <text>L-methionyl-tRNA(fMet) + (6R)-10-formyltetrahydrofolate = N-formyl-L-methionyl-tRNA(fMet) + (6S)-5,6,7,8-tetrahydrofolate + H(+)</text>
        <dbReference type="Rhea" id="RHEA:24380"/>
        <dbReference type="Rhea" id="RHEA-COMP:9952"/>
        <dbReference type="Rhea" id="RHEA-COMP:9953"/>
        <dbReference type="ChEBI" id="CHEBI:15378"/>
        <dbReference type="ChEBI" id="CHEBI:57453"/>
        <dbReference type="ChEBI" id="CHEBI:78530"/>
        <dbReference type="ChEBI" id="CHEBI:78844"/>
        <dbReference type="ChEBI" id="CHEBI:195366"/>
        <dbReference type="EC" id="2.1.2.9"/>
    </reaction>
</comment>
<comment type="similarity">
    <text evidence="1">Belongs to the Fmt family.</text>
</comment>
<dbReference type="EC" id="2.1.2.9" evidence="1"/>
<dbReference type="EMBL" id="CP000472">
    <property type="protein sequence ID" value="ACJ26903.1"/>
    <property type="molecule type" value="Genomic_DNA"/>
</dbReference>
<dbReference type="RefSeq" id="WP_020910287.1">
    <property type="nucleotide sequence ID" value="NC_011566.1"/>
</dbReference>
<dbReference type="SMR" id="B8CHB1"/>
<dbReference type="STRING" id="225849.swp_0056"/>
<dbReference type="KEGG" id="swp:swp_0056"/>
<dbReference type="eggNOG" id="COG0223">
    <property type="taxonomic scope" value="Bacteria"/>
</dbReference>
<dbReference type="HOGENOM" id="CLU_033347_1_2_6"/>
<dbReference type="OrthoDB" id="9802815at2"/>
<dbReference type="Proteomes" id="UP000000753">
    <property type="component" value="Chromosome"/>
</dbReference>
<dbReference type="GO" id="GO:0005829">
    <property type="term" value="C:cytosol"/>
    <property type="evidence" value="ECO:0007669"/>
    <property type="project" value="TreeGrafter"/>
</dbReference>
<dbReference type="GO" id="GO:0004479">
    <property type="term" value="F:methionyl-tRNA formyltransferase activity"/>
    <property type="evidence" value="ECO:0007669"/>
    <property type="project" value="UniProtKB-UniRule"/>
</dbReference>
<dbReference type="CDD" id="cd08646">
    <property type="entry name" value="FMT_core_Met-tRNA-FMT_N"/>
    <property type="match status" value="1"/>
</dbReference>
<dbReference type="CDD" id="cd08704">
    <property type="entry name" value="Met_tRNA_FMT_C"/>
    <property type="match status" value="1"/>
</dbReference>
<dbReference type="FunFam" id="3.40.50.12230:FF:000001">
    <property type="entry name" value="Methionyl-tRNA formyltransferase"/>
    <property type="match status" value="1"/>
</dbReference>
<dbReference type="FunFam" id="3.40.50.170:FF:000003">
    <property type="entry name" value="Methionyl-tRNA formyltransferase"/>
    <property type="match status" value="1"/>
</dbReference>
<dbReference type="Gene3D" id="3.10.25.10">
    <property type="entry name" value="Formyl transferase, C-terminal domain"/>
    <property type="match status" value="1"/>
</dbReference>
<dbReference type="Gene3D" id="3.40.50.170">
    <property type="entry name" value="Formyl transferase, N-terminal domain"/>
    <property type="match status" value="1"/>
</dbReference>
<dbReference type="HAMAP" id="MF_00182">
    <property type="entry name" value="Formyl_trans"/>
    <property type="match status" value="1"/>
</dbReference>
<dbReference type="InterPro" id="IPR005794">
    <property type="entry name" value="Fmt"/>
</dbReference>
<dbReference type="InterPro" id="IPR005793">
    <property type="entry name" value="Formyl_trans_C"/>
</dbReference>
<dbReference type="InterPro" id="IPR037022">
    <property type="entry name" value="Formyl_trans_C_sf"/>
</dbReference>
<dbReference type="InterPro" id="IPR002376">
    <property type="entry name" value="Formyl_transf_N"/>
</dbReference>
<dbReference type="InterPro" id="IPR036477">
    <property type="entry name" value="Formyl_transf_N_sf"/>
</dbReference>
<dbReference type="InterPro" id="IPR011034">
    <property type="entry name" value="Formyl_transferase-like_C_sf"/>
</dbReference>
<dbReference type="InterPro" id="IPR001555">
    <property type="entry name" value="GART_AS"/>
</dbReference>
<dbReference type="InterPro" id="IPR044135">
    <property type="entry name" value="Met-tRNA-FMT_C"/>
</dbReference>
<dbReference type="InterPro" id="IPR041711">
    <property type="entry name" value="Met-tRNA-FMT_N"/>
</dbReference>
<dbReference type="NCBIfam" id="TIGR00460">
    <property type="entry name" value="fmt"/>
    <property type="match status" value="1"/>
</dbReference>
<dbReference type="PANTHER" id="PTHR11138">
    <property type="entry name" value="METHIONYL-TRNA FORMYLTRANSFERASE"/>
    <property type="match status" value="1"/>
</dbReference>
<dbReference type="PANTHER" id="PTHR11138:SF5">
    <property type="entry name" value="METHIONYL-TRNA FORMYLTRANSFERASE, MITOCHONDRIAL"/>
    <property type="match status" value="1"/>
</dbReference>
<dbReference type="Pfam" id="PF02911">
    <property type="entry name" value="Formyl_trans_C"/>
    <property type="match status" value="1"/>
</dbReference>
<dbReference type="Pfam" id="PF00551">
    <property type="entry name" value="Formyl_trans_N"/>
    <property type="match status" value="1"/>
</dbReference>
<dbReference type="SUPFAM" id="SSF50486">
    <property type="entry name" value="FMT C-terminal domain-like"/>
    <property type="match status" value="1"/>
</dbReference>
<dbReference type="SUPFAM" id="SSF53328">
    <property type="entry name" value="Formyltransferase"/>
    <property type="match status" value="1"/>
</dbReference>
<dbReference type="PROSITE" id="PS00373">
    <property type="entry name" value="GART"/>
    <property type="match status" value="1"/>
</dbReference>
<evidence type="ECO:0000255" key="1">
    <source>
        <dbReference type="HAMAP-Rule" id="MF_00182"/>
    </source>
</evidence>
<reference key="1">
    <citation type="journal article" date="2008" name="PLoS ONE">
        <title>Environmental adaptation: genomic analysis of the piezotolerant and psychrotolerant deep-sea iron reducing bacterium Shewanella piezotolerans WP3.</title>
        <authorList>
            <person name="Wang F."/>
            <person name="Wang J."/>
            <person name="Jian H."/>
            <person name="Zhang B."/>
            <person name="Li S."/>
            <person name="Wang F."/>
            <person name="Zeng X."/>
            <person name="Gao L."/>
            <person name="Bartlett D.H."/>
            <person name="Yu J."/>
            <person name="Hu S."/>
            <person name="Xiao X."/>
        </authorList>
    </citation>
    <scope>NUCLEOTIDE SEQUENCE [LARGE SCALE GENOMIC DNA]</scope>
    <source>
        <strain>WP3 / JCM 13877</strain>
    </source>
</reference>
<name>FMT_SHEPW</name>
<organism>
    <name type="scientific">Shewanella piezotolerans (strain WP3 / JCM 13877)</name>
    <dbReference type="NCBI Taxonomy" id="225849"/>
    <lineage>
        <taxon>Bacteria</taxon>
        <taxon>Pseudomonadati</taxon>
        <taxon>Pseudomonadota</taxon>
        <taxon>Gammaproteobacteria</taxon>
        <taxon>Alteromonadales</taxon>
        <taxon>Shewanellaceae</taxon>
        <taxon>Shewanella</taxon>
    </lineage>
</organism>
<protein>
    <recommendedName>
        <fullName evidence="1">Methionyl-tRNA formyltransferase</fullName>
        <ecNumber evidence="1">2.1.2.9</ecNumber>
    </recommendedName>
</protein>
<feature type="chain" id="PRO_1000118486" description="Methionyl-tRNA formyltransferase">
    <location>
        <begin position="1"/>
        <end position="321"/>
    </location>
</feature>
<feature type="binding site" evidence="1">
    <location>
        <begin position="112"/>
        <end position="115"/>
    </location>
    <ligand>
        <name>(6S)-5,6,7,8-tetrahydrofolate</name>
        <dbReference type="ChEBI" id="CHEBI:57453"/>
    </ligand>
</feature>
<proteinExistence type="inferred from homology"/>
<gene>
    <name evidence="1" type="primary">fmt</name>
    <name type="ordered locus">swp_0056</name>
</gene>
<sequence>MKPLNVIFAGTPDFAARHLQALIESQHKVIAVYTQPDRPAGRGKKLQSSPVKALALENDIPVLQPKSLRDETAQQELTALNADIMVVVAYGLILPKVVLDTPRLGCINVHGSILPRWRGAAPIQRALWAGDAETGVTIMQMDIGLDTGDMLLKTQLKIEDTDTSATLYEKLADQGPSALVEALAGIAADTLPAEKQDESLANYAEKLSKEEAQIDWSKSAEALWREIRAFNPWPVSHYQHAGNTIKVWQSHVSEKTSTAAAGTVISADKNGIDVATGNGVLTITSMQLPGKKPLSVADILNSRADWFTAGTQLNNAMGDQG</sequence>
<keyword id="KW-0648">Protein biosynthesis</keyword>
<keyword id="KW-0808">Transferase</keyword>
<accession>B8CHB1</accession>